<dbReference type="EC" id="6.1.1.16" evidence="1"/>
<dbReference type="EMBL" id="CP000647">
    <property type="protein sequence ID" value="ABR75933.1"/>
    <property type="molecule type" value="Genomic_DNA"/>
</dbReference>
<dbReference type="RefSeq" id="WP_004143010.1">
    <property type="nucleotide sequence ID" value="NC_009648.1"/>
</dbReference>
<dbReference type="SMR" id="A6T5R2"/>
<dbReference type="STRING" id="272620.KPN_00482"/>
<dbReference type="jPOST" id="A6T5R2"/>
<dbReference type="PaxDb" id="272620-KPN_00482"/>
<dbReference type="EnsemblBacteria" id="ABR75933">
    <property type="protein sequence ID" value="ABR75933"/>
    <property type="gene ID" value="KPN_00482"/>
</dbReference>
<dbReference type="GeneID" id="93274614"/>
<dbReference type="KEGG" id="kpn:KPN_00482"/>
<dbReference type="HOGENOM" id="CLU_013528_0_1_6"/>
<dbReference type="Proteomes" id="UP000000265">
    <property type="component" value="Chromosome"/>
</dbReference>
<dbReference type="GO" id="GO:0005829">
    <property type="term" value="C:cytosol"/>
    <property type="evidence" value="ECO:0007669"/>
    <property type="project" value="TreeGrafter"/>
</dbReference>
<dbReference type="GO" id="GO:0005524">
    <property type="term" value="F:ATP binding"/>
    <property type="evidence" value="ECO:0007669"/>
    <property type="project" value="UniProtKB-UniRule"/>
</dbReference>
<dbReference type="GO" id="GO:0004817">
    <property type="term" value="F:cysteine-tRNA ligase activity"/>
    <property type="evidence" value="ECO:0007669"/>
    <property type="project" value="UniProtKB-UniRule"/>
</dbReference>
<dbReference type="GO" id="GO:0008270">
    <property type="term" value="F:zinc ion binding"/>
    <property type="evidence" value="ECO:0007669"/>
    <property type="project" value="UniProtKB-UniRule"/>
</dbReference>
<dbReference type="GO" id="GO:0006423">
    <property type="term" value="P:cysteinyl-tRNA aminoacylation"/>
    <property type="evidence" value="ECO:0007669"/>
    <property type="project" value="UniProtKB-UniRule"/>
</dbReference>
<dbReference type="CDD" id="cd07963">
    <property type="entry name" value="Anticodon_Ia_Cys"/>
    <property type="match status" value="1"/>
</dbReference>
<dbReference type="CDD" id="cd00672">
    <property type="entry name" value="CysRS_core"/>
    <property type="match status" value="1"/>
</dbReference>
<dbReference type="FunFam" id="1.20.120.1910:FF:000001">
    <property type="entry name" value="Cysteine--tRNA ligase"/>
    <property type="match status" value="1"/>
</dbReference>
<dbReference type="FunFam" id="3.40.50.620:FF:000009">
    <property type="entry name" value="Cysteine--tRNA ligase"/>
    <property type="match status" value="1"/>
</dbReference>
<dbReference type="Gene3D" id="1.20.120.1910">
    <property type="entry name" value="Cysteine-tRNA ligase, C-terminal anti-codon recognition domain"/>
    <property type="match status" value="1"/>
</dbReference>
<dbReference type="Gene3D" id="3.40.50.620">
    <property type="entry name" value="HUPs"/>
    <property type="match status" value="1"/>
</dbReference>
<dbReference type="HAMAP" id="MF_00041">
    <property type="entry name" value="Cys_tRNA_synth"/>
    <property type="match status" value="1"/>
</dbReference>
<dbReference type="InterPro" id="IPR015803">
    <property type="entry name" value="Cys-tRNA-ligase"/>
</dbReference>
<dbReference type="InterPro" id="IPR015273">
    <property type="entry name" value="Cys-tRNA-synt_Ia_DALR"/>
</dbReference>
<dbReference type="InterPro" id="IPR024909">
    <property type="entry name" value="Cys-tRNA/MSH_ligase"/>
</dbReference>
<dbReference type="InterPro" id="IPR056411">
    <property type="entry name" value="CysS_C"/>
</dbReference>
<dbReference type="InterPro" id="IPR014729">
    <property type="entry name" value="Rossmann-like_a/b/a_fold"/>
</dbReference>
<dbReference type="InterPro" id="IPR032678">
    <property type="entry name" value="tRNA-synt_1_cat_dom"/>
</dbReference>
<dbReference type="InterPro" id="IPR009080">
    <property type="entry name" value="tRNAsynth_Ia_anticodon-bd"/>
</dbReference>
<dbReference type="NCBIfam" id="TIGR00435">
    <property type="entry name" value="cysS"/>
    <property type="match status" value="1"/>
</dbReference>
<dbReference type="PANTHER" id="PTHR10890:SF3">
    <property type="entry name" value="CYSTEINE--TRNA LIGASE, CYTOPLASMIC"/>
    <property type="match status" value="1"/>
</dbReference>
<dbReference type="PANTHER" id="PTHR10890">
    <property type="entry name" value="CYSTEINYL-TRNA SYNTHETASE"/>
    <property type="match status" value="1"/>
</dbReference>
<dbReference type="Pfam" id="PF23493">
    <property type="entry name" value="CysS_C"/>
    <property type="match status" value="1"/>
</dbReference>
<dbReference type="Pfam" id="PF09190">
    <property type="entry name" value="DALR_2"/>
    <property type="match status" value="1"/>
</dbReference>
<dbReference type="Pfam" id="PF01406">
    <property type="entry name" value="tRNA-synt_1e"/>
    <property type="match status" value="1"/>
</dbReference>
<dbReference type="PRINTS" id="PR00983">
    <property type="entry name" value="TRNASYNTHCYS"/>
</dbReference>
<dbReference type="SMART" id="SM00840">
    <property type="entry name" value="DALR_2"/>
    <property type="match status" value="1"/>
</dbReference>
<dbReference type="SUPFAM" id="SSF47323">
    <property type="entry name" value="Anticodon-binding domain of a subclass of class I aminoacyl-tRNA synthetases"/>
    <property type="match status" value="1"/>
</dbReference>
<dbReference type="SUPFAM" id="SSF52374">
    <property type="entry name" value="Nucleotidylyl transferase"/>
    <property type="match status" value="1"/>
</dbReference>
<gene>
    <name evidence="1" type="primary">cysS</name>
    <name type="ordered locus">KPN78578_04720</name>
    <name type="ORF">KPN_00482</name>
</gene>
<organism>
    <name type="scientific">Klebsiella pneumoniae subsp. pneumoniae (strain ATCC 700721 / MGH 78578)</name>
    <dbReference type="NCBI Taxonomy" id="272620"/>
    <lineage>
        <taxon>Bacteria</taxon>
        <taxon>Pseudomonadati</taxon>
        <taxon>Pseudomonadota</taxon>
        <taxon>Gammaproteobacteria</taxon>
        <taxon>Enterobacterales</taxon>
        <taxon>Enterobacteriaceae</taxon>
        <taxon>Klebsiella/Raoultella group</taxon>
        <taxon>Klebsiella</taxon>
        <taxon>Klebsiella pneumoniae complex</taxon>
    </lineage>
</organism>
<proteinExistence type="inferred from homology"/>
<evidence type="ECO:0000255" key="1">
    <source>
        <dbReference type="HAMAP-Rule" id="MF_00041"/>
    </source>
</evidence>
<keyword id="KW-0030">Aminoacyl-tRNA synthetase</keyword>
<keyword id="KW-0067">ATP-binding</keyword>
<keyword id="KW-0963">Cytoplasm</keyword>
<keyword id="KW-0436">Ligase</keyword>
<keyword id="KW-0479">Metal-binding</keyword>
<keyword id="KW-0547">Nucleotide-binding</keyword>
<keyword id="KW-0648">Protein biosynthesis</keyword>
<keyword id="KW-0862">Zinc</keyword>
<sequence length="461" mass="52168">MLKIFNTLTRQKEEFKPIHAGEVGMYVCGITVYDLCHIGHGRTFVSFDVVARYLRFLGYKLKYVRNITDIDDKIIKRANENGESFVALVDRMIAEMHKDFDALNILRPDSEPRATHHIAEIIEITEQLIAKGHAYVADNGDVMFDVPTDPNYGLLSRQDLDQLQAGARVDVVDVKRNPMDFVLWKMSKEGEPSWPSPWGAGRPGWHIECSAMNCKQLGNHFDIHGGGSDLMFPHHENEIAQSTCAHDGEYVNYWMHSGMVMVDREKMSKSLGNFFTVRDVLKYYDAETIRYFLMSGHYRSQLNYSEENLKQARSALERLYTALRGTDKSVDAAGGEAFEARFIEAMDDDFNTPEAYSVLFDMAREVNRLKTEDAAAANAMAAHLRKLAAVLGLLEQEPEAFLQSGAQVDDAEVAEIESLIQQRLDARKAKDWAAADAARDRLNEMGIVLEDGPQGTTWRRK</sequence>
<reference key="1">
    <citation type="submission" date="2006-09" db="EMBL/GenBank/DDBJ databases">
        <authorList>
            <consortium name="The Klebsiella pneumonia Genome Sequencing Project"/>
            <person name="McClelland M."/>
            <person name="Sanderson E.K."/>
            <person name="Spieth J."/>
            <person name="Clifton W.S."/>
            <person name="Latreille P."/>
            <person name="Sabo A."/>
            <person name="Pepin K."/>
            <person name="Bhonagiri V."/>
            <person name="Porwollik S."/>
            <person name="Ali J."/>
            <person name="Wilson R.K."/>
        </authorList>
    </citation>
    <scope>NUCLEOTIDE SEQUENCE [LARGE SCALE GENOMIC DNA]</scope>
    <source>
        <strain>ATCC 700721 / MGH 78578</strain>
    </source>
</reference>
<protein>
    <recommendedName>
        <fullName evidence="1">Cysteine--tRNA ligase</fullName>
        <ecNumber evidence="1">6.1.1.16</ecNumber>
    </recommendedName>
    <alternativeName>
        <fullName evidence="1">Cysteinyl-tRNA synthetase</fullName>
        <shortName evidence="1">CysRS</shortName>
    </alternativeName>
</protein>
<feature type="chain" id="PRO_0000332836" description="Cysteine--tRNA ligase">
    <location>
        <begin position="1"/>
        <end position="461"/>
    </location>
</feature>
<feature type="short sequence motif" description="'HIGH' region">
    <location>
        <begin position="30"/>
        <end position="40"/>
    </location>
</feature>
<feature type="short sequence motif" description="'KMSKS' region">
    <location>
        <begin position="266"/>
        <end position="270"/>
    </location>
</feature>
<feature type="binding site" evidence="1">
    <location>
        <position position="28"/>
    </location>
    <ligand>
        <name>Zn(2+)</name>
        <dbReference type="ChEBI" id="CHEBI:29105"/>
    </ligand>
</feature>
<feature type="binding site" evidence="1">
    <location>
        <position position="209"/>
    </location>
    <ligand>
        <name>Zn(2+)</name>
        <dbReference type="ChEBI" id="CHEBI:29105"/>
    </ligand>
</feature>
<feature type="binding site" evidence="1">
    <location>
        <position position="234"/>
    </location>
    <ligand>
        <name>Zn(2+)</name>
        <dbReference type="ChEBI" id="CHEBI:29105"/>
    </ligand>
</feature>
<feature type="binding site" evidence="1">
    <location>
        <position position="238"/>
    </location>
    <ligand>
        <name>Zn(2+)</name>
        <dbReference type="ChEBI" id="CHEBI:29105"/>
    </ligand>
</feature>
<feature type="binding site" evidence="1">
    <location>
        <position position="269"/>
    </location>
    <ligand>
        <name>ATP</name>
        <dbReference type="ChEBI" id="CHEBI:30616"/>
    </ligand>
</feature>
<accession>A6T5R2</accession>
<name>SYC_KLEP7</name>
<comment type="catalytic activity">
    <reaction evidence="1">
        <text>tRNA(Cys) + L-cysteine + ATP = L-cysteinyl-tRNA(Cys) + AMP + diphosphate</text>
        <dbReference type="Rhea" id="RHEA:17773"/>
        <dbReference type="Rhea" id="RHEA-COMP:9661"/>
        <dbReference type="Rhea" id="RHEA-COMP:9679"/>
        <dbReference type="ChEBI" id="CHEBI:30616"/>
        <dbReference type="ChEBI" id="CHEBI:33019"/>
        <dbReference type="ChEBI" id="CHEBI:35235"/>
        <dbReference type="ChEBI" id="CHEBI:78442"/>
        <dbReference type="ChEBI" id="CHEBI:78517"/>
        <dbReference type="ChEBI" id="CHEBI:456215"/>
        <dbReference type="EC" id="6.1.1.16"/>
    </reaction>
</comment>
<comment type="cofactor">
    <cofactor evidence="1">
        <name>Zn(2+)</name>
        <dbReference type="ChEBI" id="CHEBI:29105"/>
    </cofactor>
    <text evidence="1">Binds 1 zinc ion per subunit.</text>
</comment>
<comment type="subunit">
    <text evidence="1">Monomer.</text>
</comment>
<comment type="subcellular location">
    <subcellularLocation>
        <location evidence="1">Cytoplasm</location>
    </subcellularLocation>
</comment>
<comment type="similarity">
    <text evidence="1">Belongs to the class-I aminoacyl-tRNA synthetase family.</text>
</comment>